<gene>
    <name type="primary">POLR2J2</name>
</gene>
<reference key="1">
    <citation type="journal article" date="2001" name="BMC Mol. Biol.">
        <title>A human RNA polymerase II subunit is encoded by a recently generated multigene family.</title>
        <authorList>
            <person name="Grandemange S."/>
            <person name="Schaller S."/>
            <person name="Yamano S."/>
            <person name="Du Manoir S."/>
            <person name="Shpakovski G.V."/>
            <person name="Mattei M.-G."/>
            <person name="Kedinger C."/>
            <person name="Vigneron M."/>
        </authorList>
    </citation>
    <scope>NUCLEOTIDE SEQUENCE [GENOMIC DNA / MRNA] (ISOFORMS 1 AND 2)</scope>
    <scope>TISSUE SPECIFICITY</scope>
    <scope>VARIANT ASN-28</scope>
    <source>
        <tissue>Cervix carcinoma</tissue>
        <tissue>Placenta</tissue>
    </source>
</reference>
<reference key="2">
    <citation type="journal article" date="2003" name="Nature">
        <title>The DNA sequence of human chromosome 7.</title>
        <authorList>
            <person name="Hillier L.W."/>
            <person name="Fulton R.S."/>
            <person name="Fulton L.A."/>
            <person name="Graves T.A."/>
            <person name="Pepin K.H."/>
            <person name="Wagner-McPherson C."/>
            <person name="Layman D."/>
            <person name="Maas J."/>
            <person name="Jaeger S."/>
            <person name="Walker R."/>
            <person name="Wylie K."/>
            <person name="Sekhon M."/>
            <person name="Becker M.C."/>
            <person name="O'Laughlin M.D."/>
            <person name="Schaller M.E."/>
            <person name="Fewell G.A."/>
            <person name="Delehaunty K.D."/>
            <person name="Miner T.L."/>
            <person name="Nash W.E."/>
            <person name="Cordes M."/>
            <person name="Du H."/>
            <person name="Sun H."/>
            <person name="Edwards J."/>
            <person name="Bradshaw-Cordum H."/>
            <person name="Ali J."/>
            <person name="Andrews S."/>
            <person name="Isak A."/>
            <person name="Vanbrunt A."/>
            <person name="Nguyen C."/>
            <person name="Du F."/>
            <person name="Lamar B."/>
            <person name="Courtney L."/>
            <person name="Kalicki J."/>
            <person name="Ozersky P."/>
            <person name="Bielicki L."/>
            <person name="Scott K."/>
            <person name="Holmes A."/>
            <person name="Harkins R."/>
            <person name="Harris A."/>
            <person name="Strong C.M."/>
            <person name="Hou S."/>
            <person name="Tomlinson C."/>
            <person name="Dauphin-Kohlberg S."/>
            <person name="Kozlowicz-Reilly A."/>
            <person name="Leonard S."/>
            <person name="Rohlfing T."/>
            <person name="Rock S.M."/>
            <person name="Tin-Wollam A.-M."/>
            <person name="Abbott A."/>
            <person name="Minx P."/>
            <person name="Maupin R."/>
            <person name="Strowmatt C."/>
            <person name="Latreille P."/>
            <person name="Miller N."/>
            <person name="Johnson D."/>
            <person name="Murray J."/>
            <person name="Woessner J.P."/>
            <person name="Wendl M.C."/>
            <person name="Yang S.-P."/>
            <person name="Schultz B.R."/>
            <person name="Wallis J.W."/>
            <person name="Spieth J."/>
            <person name="Bieri T.A."/>
            <person name="Nelson J.O."/>
            <person name="Berkowicz N."/>
            <person name="Wohldmann P.E."/>
            <person name="Cook L.L."/>
            <person name="Hickenbotham M.T."/>
            <person name="Eldred J."/>
            <person name="Williams D."/>
            <person name="Bedell J.A."/>
            <person name="Mardis E.R."/>
            <person name="Clifton S.W."/>
            <person name="Chissoe S.L."/>
            <person name="Marra M.A."/>
            <person name="Raymond C."/>
            <person name="Haugen E."/>
            <person name="Gillett W."/>
            <person name="Zhou Y."/>
            <person name="James R."/>
            <person name="Phelps K."/>
            <person name="Iadanoto S."/>
            <person name="Bubb K."/>
            <person name="Simms E."/>
            <person name="Levy R."/>
            <person name="Clendenning J."/>
            <person name="Kaul R."/>
            <person name="Kent W.J."/>
            <person name="Furey T.S."/>
            <person name="Baertsch R.A."/>
            <person name="Brent M.R."/>
            <person name="Keibler E."/>
            <person name="Flicek P."/>
            <person name="Bork P."/>
            <person name="Suyama M."/>
            <person name="Bailey J.A."/>
            <person name="Portnoy M.E."/>
            <person name="Torrents D."/>
            <person name="Chinwalla A.T."/>
            <person name="Gish W.R."/>
            <person name="Eddy S.R."/>
            <person name="McPherson J.D."/>
            <person name="Olson M.V."/>
            <person name="Eichler E.E."/>
            <person name="Green E.D."/>
            <person name="Waterston R.H."/>
            <person name="Wilson R.K."/>
        </authorList>
    </citation>
    <scope>NUCLEOTIDE SEQUENCE [LARGE SCALE GENOMIC DNA]</scope>
</reference>
<reference key="3">
    <citation type="journal article" date="2004" name="Genome Res.">
        <title>The status, quality, and expansion of the NIH full-length cDNA project: the Mammalian Gene Collection (MGC).</title>
        <authorList>
            <consortium name="The MGC Project Team"/>
        </authorList>
    </citation>
    <scope>NUCLEOTIDE SEQUENCE [LARGE SCALE MRNA] (ISOFORM 2)</scope>
    <scope>VARIANT ASN-28</scope>
    <source>
        <tissue>Lung</tissue>
    </source>
</reference>
<reference key="4">
    <citation type="journal article" date="2002" name="Genomics">
        <title>The thymocyte-specific MAR binding protein, SATB1, interacts in vitro with a novel variant of DNA-directed RNA polymerase II, subunit 11.</title>
        <authorList>
            <person name="Durrin L.K."/>
            <person name="Krontiris T.G."/>
        </authorList>
    </citation>
    <scope>INTERACTION WITH SATB1</scope>
</reference>
<keyword id="KW-0025">Alternative splicing</keyword>
<keyword id="KW-0240">DNA-directed RNA polymerase</keyword>
<keyword id="KW-0539">Nucleus</keyword>
<keyword id="KW-1185">Reference proteome</keyword>
<keyword id="KW-0804">Transcription</keyword>
<dbReference type="EMBL" id="AJ277931">
    <property type="protein sequence ID" value="CAC18332.1"/>
    <property type="molecule type" value="Genomic_DNA"/>
</dbReference>
<dbReference type="EMBL" id="AJ277739">
    <property type="protein sequence ID" value="CAC18329.1"/>
    <property type="molecule type" value="mRNA"/>
</dbReference>
<dbReference type="EMBL" id="AJ277740">
    <property type="protein sequence ID" value="CAC18330.1"/>
    <property type="molecule type" value="mRNA"/>
</dbReference>
<dbReference type="EMBL" id="AC105052">
    <property type="status" value="NOT_ANNOTATED_CDS"/>
    <property type="molecule type" value="Genomic_DNA"/>
</dbReference>
<dbReference type="EMBL" id="BC086857">
    <property type="protein sequence ID" value="AAH86857.1"/>
    <property type="molecule type" value="mRNA"/>
</dbReference>
<dbReference type="CCDS" id="CCDS43627.1">
    <molecule id="Q9GZM3-1"/>
</dbReference>
<dbReference type="RefSeq" id="NP_116581.3">
    <molecule id="Q9GZM3-1"/>
    <property type="nucleotide sequence ID" value="NM_032959.5"/>
</dbReference>
<dbReference type="RefSeq" id="XP_016867861.1">
    <property type="nucleotide sequence ID" value="XM_017012372.1"/>
</dbReference>
<dbReference type="RefSeq" id="XP_016867862.1">
    <property type="nucleotide sequence ID" value="XM_017012373.1"/>
</dbReference>
<dbReference type="SMR" id="Q9GZM3"/>
<dbReference type="BioGRID" id="128910">
    <property type="interactions" value="4"/>
</dbReference>
<dbReference type="BioGRID" id="139239">
    <property type="interactions" value="36"/>
</dbReference>
<dbReference type="FunCoup" id="Q9GZM3">
    <property type="interactions" value="116"/>
</dbReference>
<dbReference type="IntAct" id="Q9GZM3">
    <property type="interactions" value="12"/>
</dbReference>
<dbReference type="MINT" id="Q9GZM3"/>
<dbReference type="STRING" id="9606.ENSP00000330898"/>
<dbReference type="iPTMnet" id="Q9GZM3"/>
<dbReference type="PhosphoSitePlus" id="Q9GZM3"/>
<dbReference type="BioMuta" id="POLR2J2"/>
<dbReference type="jPOST" id="Q9GZM3"/>
<dbReference type="MassIVE" id="Q9GZM3"/>
<dbReference type="PaxDb" id="9606-ENSP00000330898"/>
<dbReference type="PeptideAtlas" id="Q9GZM3"/>
<dbReference type="ProteomicsDB" id="28095"/>
<dbReference type="ProteomicsDB" id="80086">
    <molecule id="Q9GZM3-2"/>
</dbReference>
<dbReference type="Pumba" id="Q9GZM3"/>
<dbReference type="Antibodypedia" id="57740">
    <property type="antibodies" value="91 antibodies from 11 providers"/>
</dbReference>
<dbReference type="DNASU" id="246721"/>
<dbReference type="Ensembl" id="ENST00000333432.9">
    <molecule id="Q9GZM3-1"/>
    <property type="protein sequence ID" value="ENSP00000330898.7"/>
    <property type="gene ID" value="ENSG00000228049.8"/>
</dbReference>
<dbReference type="GeneID" id="246721"/>
<dbReference type="KEGG" id="hsa:246721"/>
<dbReference type="KEGG" id="hsa:548644"/>
<dbReference type="MANE-Select" id="ENST00000333432.9">
    <property type="protein sequence ID" value="ENSP00000330898.7"/>
    <property type="RefSeq nucleotide sequence ID" value="NM_032959.7"/>
    <property type="RefSeq protein sequence ID" value="NP_116581.3"/>
</dbReference>
<dbReference type="UCSC" id="uc003vah.4">
    <molecule id="Q9GZM3-1"/>
    <property type="organism name" value="human"/>
</dbReference>
<dbReference type="AGR" id="HGNC:23208"/>
<dbReference type="AGR" id="HGNC:33853"/>
<dbReference type="CTD" id="246721"/>
<dbReference type="CTD" id="548644"/>
<dbReference type="GeneCards" id="POLR2J2"/>
<dbReference type="HGNC" id="HGNC:23208">
    <property type="gene designation" value="POLR2J2"/>
</dbReference>
<dbReference type="HPA" id="ENSG00000228049">
    <property type="expression patterns" value="Low tissue specificity"/>
</dbReference>
<dbReference type="MIM" id="609881">
    <property type="type" value="gene"/>
</dbReference>
<dbReference type="neXtProt" id="NX_Q9GZM3"/>
<dbReference type="PharmGKB" id="PA164724655"/>
<dbReference type="VEuPathDB" id="HostDB:ENSG00000228049"/>
<dbReference type="eggNOG" id="KOG4392">
    <property type="taxonomic scope" value="Eukaryota"/>
</dbReference>
<dbReference type="GeneTree" id="ENSGT00550000074975"/>
<dbReference type="HOGENOM" id="CLU_090381_2_2_1"/>
<dbReference type="InParanoid" id="Q9GZM3"/>
<dbReference type="OMA" id="MNQPERY"/>
<dbReference type="OrthoDB" id="10248581at2759"/>
<dbReference type="PAN-GO" id="Q9GZM3">
    <property type="GO annotations" value="2 GO annotations based on evolutionary models"/>
</dbReference>
<dbReference type="TreeFam" id="TF103044"/>
<dbReference type="PathwayCommons" id="Q9GZM3"/>
<dbReference type="SIGNOR" id="Q9GZM3"/>
<dbReference type="BioGRID-ORCS" id="246721">
    <property type="hits" value="49 hits in 357 CRISPR screens"/>
</dbReference>
<dbReference type="BioGRID-ORCS" id="548644">
    <property type="hits" value="83 hits in 320 CRISPR screens"/>
</dbReference>
<dbReference type="ChiTaRS" id="POLR2J2">
    <property type="organism name" value="human"/>
</dbReference>
<dbReference type="GeneWiki" id="POLR2J2"/>
<dbReference type="Pharos" id="Q9GZM3">
    <property type="development level" value="Tdark"/>
</dbReference>
<dbReference type="PRO" id="PR:Q9GZM3"/>
<dbReference type="Proteomes" id="UP000005640">
    <property type="component" value="Chromosome 7"/>
</dbReference>
<dbReference type="RNAct" id="Q9GZM3">
    <property type="molecule type" value="protein"/>
</dbReference>
<dbReference type="Bgee" id="ENSG00000228049">
    <property type="expression patterns" value="Expressed in male germ line stem cell (sensu Vertebrata) in testis and 98 other cell types or tissues"/>
</dbReference>
<dbReference type="ExpressionAtlas" id="Q9GZM3">
    <property type="expression patterns" value="baseline and differential"/>
</dbReference>
<dbReference type="GO" id="GO:0005665">
    <property type="term" value="C:RNA polymerase II, core complex"/>
    <property type="evidence" value="ECO:0000318"/>
    <property type="project" value="GO_Central"/>
</dbReference>
<dbReference type="GO" id="GO:0003677">
    <property type="term" value="F:DNA binding"/>
    <property type="evidence" value="ECO:0007669"/>
    <property type="project" value="InterPro"/>
</dbReference>
<dbReference type="GO" id="GO:0003899">
    <property type="term" value="F:DNA-directed RNA polymerase activity"/>
    <property type="evidence" value="ECO:0007669"/>
    <property type="project" value="InterPro"/>
</dbReference>
<dbReference type="GO" id="GO:0046983">
    <property type="term" value="F:protein dimerization activity"/>
    <property type="evidence" value="ECO:0007669"/>
    <property type="project" value="InterPro"/>
</dbReference>
<dbReference type="GO" id="GO:0006366">
    <property type="term" value="P:transcription by RNA polymerase II"/>
    <property type="evidence" value="ECO:0000318"/>
    <property type="project" value="GO_Central"/>
</dbReference>
<dbReference type="CDD" id="cd06926">
    <property type="entry name" value="RNAP_II_RPB11"/>
    <property type="match status" value="1"/>
</dbReference>
<dbReference type="FunFam" id="3.30.1360.10:FF:000003">
    <property type="entry name" value="DNA-directed RNA polymerase II subunit RPB11"/>
    <property type="match status" value="1"/>
</dbReference>
<dbReference type="Gene3D" id="3.30.1360.10">
    <property type="entry name" value="RNA polymerase, RBP11-like subunit"/>
    <property type="match status" value="1"/>
</dbReference>
<dbReference type="HAMAP" id="MF_00261">
    <property type="entry name" value="RNApol_arch_Rpo11"/>
    <property type="match status" value="1"/>
</dbReference>
<dbReference type="InterPro" id="IPR037685">
    <property type="entry name" value="RBP11"/>
</dbReference>
<dbReference type="InterPro" id="IPR036603">
    <property type="entry name" value="RBP11-like"/>
</dbReference>
<dbReference type="InterPro" id="IPR009025">
    <property type="entry name" value="RBP11-like_dimer"/>
</dbReference>
<dbReference type="InterPro" id="IPR008193">
    <property type="entry name" value="RNA_pol_Rpb11_13-16kDa_CS"/>
</dbReference>
<dbReference type="InterPro" id="IPR022905">
    <property type="entry name" value="Rpo11-like"/>
</dbReference>
<dbReference type="PANTHER" id="PTHR13946">
    <property type="entry name" value="DNA-DIRECTED RNA POLYMERASE I,II,III"/>
    <property type="match status" value="1"/>
</dbReference>
<dbReference type="PANTHER" id="PTHR13946:SF46">
    <property type="entry name" value="DNA-DIRECTED RNA POLYMERASE II SUBUNIT RPB11-A-RELATED"/>
    <property type="match status" value="1"/>
</dbReference>
<dbReference type="Pfam" id="PF13656">
    <property type="entry name" value="RNA_pol_L_2"/>
    <property type="match status" value="1"/>
</dbReference>
<dbReference type="SUPFAM" id="SSF55257">
    <property type="entry name" value="RBP11-like subunits of RNA polymerase"/>
    <property type="match status" value="1"/>
</dbReference>
<dbReference type="PROSITE" id="PS01154">
    <property type="entry name" value="RNA_POL_L_13KD"/>
    <property type="match status" value="1"/>
</dbReference>
<evidence type="ECO:0000250" key="1"/>
<evidence type="ECO:0000269" key="2">
    <source>
    </source>
</evidence>
<evidence type="ECO:0000269" key="3">
    <source>
    </source>
</evidence>
<evidence type="ECO:0000303" key="4">
    <source>
    </source>
</evidence>
<evidence type="ECO:0000303" key="5">
    <source>
    </source>
</evidence>
<evidence type="ECO:0000305" key="6"/>
<comment type="function">
    <text evidence="1">DNA-dependent RNA polymerase catalyzes the transcription of DNA into RNA using the four ribonucleoside triphosphates as substrates. Component of RNA polymerase II which synthesizes mRNA precursors and many functional non-coding RNAs. Pol II is the central component of the basal RNA polymerase II transcription machinery. It is composed of mobile elements that move relative to each other. RPB11 is part of the core element with the central large cleft (By similarity).</text>
</comment>
<comment type="subunit">
    <text>Component of the RNA polymerase II (Pol II) complex consisting of 12 subunits.</text>
</comment>
<comment type="subcellular location">
    <subcellularLocation>
        <location evidence="1">Nucleus</location>
    </subcellularLocation>
</comment>
<comment type="alternative products">
    <event type="alternative splicing"/>
    <isoform>
        <id>Q9GZM3-1</id>
        <name>1</name>
        <name>RPB11b1-alpha</name>
        <sequence type="displayed"/>
    </isoform>
    <isoform>
        <id>Q9GZM3-2</id>
        <name>2</name>
        <name>RPB11b1-beta</name>
        <sequence type="described" ref="VSP_030820"/>
    </isoform>
</comment>
<comment type="tissue specificity">
    <text evidence="2">Ubiquitously expressed.</text>
</comment>
<comment type="similarity">
    <text evidence="6">Belongs to the archaeal Rpo11/eukaryotic RPB11/RPC19 RNA polymerase subunit family.</text>
</comment>
<sequence length="115" mass="13088">MNAPPAFESFLLFEGEKITINKDTKVPKACLFTINKEDHTLGNIIKSQLLKDPQVLFAGYKVPHPLEHKIIIRVQTTPDYSPQEAFTNAITDLISELSLLEERFRTCLLPLRLLP</sequence>
<accession>Q9GZM3</accession>
<accession>F6W009</accession>
<accession>Q9H1A8</accession>
<name>RPB1B_HUMAN</name>
<organism>
    <name type="scientific">Homo sapiens</name>
    <name type="common">Human</name>
    <dbReference type="NCBI Taxonomy" id="9606"/>
    <lineage>
        <taxon>Eukaryota</taxon>
        <taxon>Metazoa</taxon>
        <taxon>Chordata</taxon>
        <taxon>Craniata</taxon>
        <taxon>Vertebrata</taxon>
        <taxon>Euteleostomi</taxon>
        <taxon>Mammalia</taxon>
        <taxon>Eutheria</taxon>
        <taxon>Euarchontoglires</taxon>
        <taxon>Primates</taxon>
        <taxon>Haplorrhini</taxon>
        <taxon>Catarrhini</taxon>
        <taxon>Hominidae</taxon>
        <taxon>Homo</taxon>
    </lineage>
</organism>
<feature type="chain" id="PRO_0000316946" description="DNA-directed RNA polymerase II subunit RPB11-b1">
    <location>
        <begin position="1"/>
        <end position="115"/>
    </location>
</feature>
<feature type="splice variant" id="VSP_030820" description="In isoform 2." evidence="4 5">
    <original>QLLKDPQVLFAGYKVPHPLEHKIIIRVQTTPDYSPQEAFTNAITDLISELSLLEERFRTCLLPLRLLP</original>
    <variation>RACFPFAFCRDCQFPEASPATLPVQPAELCPRAHQLCAPALKRHLGGEAHPVHLHAGAASRPVQQPQHL</variation>
    <location>
        <begin position="48"/>
        <end position="115"/>
    </location>
</feature>
<feature type="sequence variant" id="VAR_070807" description="In dbSNP:rs62483491." evidence="2 3">
    <original>K</original>
    <variation>N</variation>
    <location>
        <position position="28"/>
    </location>
</feature>
<proteinExistence type="evidence at protein level"/>
<protein>
    <recommendedName>
        <fullName>DNA-directed RNA polymerase II subunit RPB11-b1</fullName>
        <shortName>RNA polymerase II subunit B11-b1</shortName>
        <shortName>RPB11b1</shortName>
    </recommendedName>
    <alternativeName>
        <fullName>DNA-directed RNA polymerase II subunit J2</fullName>
    </alternativeName>
</protein>